<accession>Q927N8</accession>
<organism>
    <name type="scientific">Listeria innocua serovar 6a (strain ATCC BAA-680 / CLIP 11262)</name>
    <dbReference type="NCBI Taxonomy" id="272626"/>
    <lineage>
        <taxon>Bacteria</taxon>
        <taxon>Bacillati</taxon>
        <taxon>Bacillota</taxon>
        <taxon>Bacilli</taxon>
        <taxon>Bacillales</taxon>
        <taxon>Listeriaceae</taxon>
        <taxon>Listeria</taxon>
    </lineage>
</organism>
<protein>
    <recommendedName>
        <fullName evidence="1">Energy-coupling factor transporter ATP-binding protein EcfA1</fullName>
        <shortName evidence="1">ECF transporter A component EcfA1</shortName>
        <ecNumber evidence="1">7.-.-.-</ecNumber>
    </recommendedName>
</protein>
<reference key="1">
    <citation type="journal article" date="2001" name="Science">
        <title>Comparative genomics of Listeria species.</title>
        <authorList>
            <person name="Glaser P."/>
            <person name="Frangeul L."/>
            <person name="Buchrieser C."/>
            <person name="Rusniok C."/>
            <person name="Amend A."/>
            <person name="Baquero F."/>
            <person name="Berche P."/>
            <person name="Bloecker H."/>
            <person name="Brandt P."/>
            <person name="Chakraborty T."/>
            <person name="Charbit A."/>
            <person name="Chetouani F."/>
            <person name="Couve E."/>
            <person name="de Daruvar A."/>
            <person name="Dehoux P."/>
            <person name="Domann E."/>
            <person name="Dominguez-Bernal G."/>
            <person name="Duchaud E."/>
            <person name="Durant L."/>
            <person name="Dussurget O."/>
            <person name="Entian K.-D."/>
            <person name="Fsihi H."/>
            <person name="Garcia-del Portillo F."/>
            <person name="Garrido P."/>
            <person name="Gautier L."/>
            <person name="Goebel W."/>
            <person name="Gomez-Lopez N."/>
            <person name="Hain T."/>
            <person name="Hauf J."/>
            <person name="Jackson D."/>
            <person name="Jones L.-M."/>
            <person name="Kaerst U."/>
            <person name="Kreft J."/>
            <person name="Kuhn M."/>
            <person name="Kunst F."/>
            <person name="Kurapkat G."/>
            <person name="Madueno E."/>
            <person name="Maitournam A."/>
            <person name="Mata Vicente J."/>
            <person name="Ng E."/>
            <person name="Nedjari H."/>
            <person name="Nordsiek G."/>
            <person name="Novella S."/>
            <person name="de Pablos B."/>
            <person name="Perez-Diaz J.-C."/>
            <person name="Purcell R."/>
            <person name="Remmel B."/>
            <person name="Rose M."/>
            <person name="Schlueter T."/>
            <person name="Simoes N."/>
            <person name="Tierrez A."/>
            <person name="Vazquez-Boland J.-A."/>
            <person name="Voss H."/>
            <person name="Wehland J."/>
            <person name="Cossart P."/>
        </authorList>
    </citation>
    <scope>NUCLEOTIDE SEQUENCE [LARGE SCALE GENOMIC DNA]</scope>
    <source>
        <strain>ATCC BAA-680 / CLIP 11262</strain>
    </source>
</reference>
<proteinExistence type="inferred from homology"/>
<dbReference type="EC" id="7.-.-.-" evidence="1"/>
<dbReference type="EMBL" id="AL596173">
    <property type="protein sequence ID" value="CAC97976.1"/>
    <property type="molecule type" value="Genomic_DNA"/>
</dbReference>
<dbReference type="PIR" id="AH1775">
    <property type="entry name" value="AH1775"/>
</dbReference>
<dbReference type="RefSeq" id="WP_010991371.1">
    <property type="nucleotide sequence ID" value="NC_003212.1"/>
</dbReference>
<dbReference type="SMR" id="Q927N8"/>
<dbReference type="STRING" id="272626.gene:17567137"/>
<dbReference type="GeneID" id="93236023"/>
<dbReference type="KEGG" id="lin:lin2750"/>
<dbReference type="eggNOG" id="COG1122">
    <property type="taxonomic scope" value="Bacteria"/>
</dbReference>
<dbReference type="HOGENOM" id="CLU_000604_1_22_9"/>
<dbReference type="OrthoDB" id="9784332at2"/>
<dbReference type="Proteomes" id="UP000002513">
    <property type="component" value="Chromosome"/>
</dbReference>
<dbReference type="GO" id="GO:0043190">
    <property type="term" value="C:ATP-binding cassette (ABC) transporter complex"/>
    <property type="evidence" value="ECO:0007669"/>
    <property type="project" value="TreeGrafter"/>
</dbReference>
<dbReference type="GO" id="GO:0005524">
    <property type="term" value="F:ATP binding"/>
    <property type="evidence" value="ECO:0007669"/>
    <property type="project" value="UniProtKB-KW"/>
</dbReference>
<dbReference type="GO" id="GO:0016887">
    <property type="term" value="F:ATP hydrolysis activity"/>
    <property type="evidence" value="ECO:0007669"/>
    <property type="project" value="InterPro"/>
</dbReference>
<dbReference type="GO" id="GO:0042626">
    <property type="term" value="F:ATPase-coupled transmembrane transporter activity"/>
    <property type="evidence" value="ECO:0007669"/>
    <property type="project" value="TreeGrafter"/>
</dbReference>
<dbReference type="CDD" id="cd03225">
    <property type="entry name" value="ABC_cobalt_CbiO_domain1"/>
    <property type="match status" value="1"/>
</dbReference>
<dbReference type="FunFam" id="3.40.50.300:FF:000224">
    <property type="entry name" value="Energy-coupling factor transporter ATP-binding protein EcfA"/>
    <property type="match status" value="1"/>
</dbReference>
<dbReference type="Gene3D" id="3.40.50.300">
    <property type="entry name" value="P-loop containing nucleotide triphosphate hydrolases"/>
    <property type="match status" value="1"/>
</dbReference>
<dbReference type="InterPro" id="IPR003593">
    <property type="entry name" value="AAA+_ATPase"/>
</dbReference>
<dbReference type="InterPro" id="IPR003439">
    <property type="entry name" value="ABC_transporter-like_ATP-bd"/>
</dbReference>
<dbReference type="InterPro" id="IPR017871">
    <property type="entry name" value="ABC_transporter-like_CS"/>
</dbReference>
<dbReference type="InterPro" id="IPR015856">
    <property type="entry name" value="ABC_transpr_CbiO/EcfA_su"/>
</dbReference>
<dbReference type="InterPro" id="IPR050095">
    <property type="entry name" value="ECF_ABC_transporter_ATP-bd"/>
</dbReference>
<dbReference type="InterPro" id="IPR030947">
    <property type="entry name" value="EcfA_1"/>
</dbReference>
<dbReference type="InterPro" id="IPR027417">
    <property type="entry name" value="P-loop_NTPase"/>
</dbReference>
<dbReference type="NCBIfam" id="TIGR04520">
    <property type="entry name" value="ECF_ATPase_1"/>
    <property type="match status" value="1"/>
</dbReference>
<dbReference type="NCBIfam" id="NF010156">
    <property type="entry name" value="PRK13635.1"/>
    <property type="match status" value="1"/>
</dbReference>
<dbReference type="NCBIfam" id="NF010167">
    <property type="entry name" value="PRK13648.1"/>
    <property type="match status" value="1"/>
</dbReference>
<dbReference type="PANTHER" id="PTHR43553:SF24">
    <property type="entry name" value="ENERGY-COUPLING FACTOR TRANSPORTER ATP-BINDING PROTEIN ECFA1"/>
    <property type="match status" value="1"/>
</dbReference>
<dbReference type="PANTHER" id="PTHR43553">
    <property type="entry name" value="HEAVY METAL TRANSPORTER"/>
    <property type="match status" value="1"/>
</dbReference>
<dbReference type="Pfam" id="PF00005">
    <property type="entry name" value="ABC_tran"/>
    <property type="match status" value="1"/>
</dbReference>
<dbReference type="SMART" id="SM00382">
    <property type="entry name" value="AAA"/>
    <property type="match status" value="1"/>
</dbReference>
<dbReference type="SUPFAM" id="SSF52540">
    <property type="entry name" value="P-loop containing nucleoside triphosphate hydrolases"/>
    <property type="match status" value="1"/>
</dbReference>
<dbReference type="PROSITE" id="PS00211">
    <property type="entry name" value="ABC_TRANSPORTER_1"/>
    <property type="match status" value="1"/>
</dbReference>
<dbReference type="PROSITE" id="PS50893">
    <property type="entry name" value="ABC_TRANSPORTER_2"/>
    <property type="match status" value="1"/>
</dbReference>
<dbReference type="PROSITE" id="PS51246">
    <property type="entry name" value="CBIO"/>
    <property type="match status" value="1"/>
</dbReference>
<gene>
    <name evidence="1" type="primary">ecfA1</name>
    <name type="synonym">cbiO1</name>
    <name type="ordered locus">lin2750</name>
</gene>
<comment type="function">
    <text evidence="1">ATP-binding (A) component of a common energy-coupling factor (ECF) ABC-transporter complex. Unlike classic ABC transporters this ECF transporter provides the energy necessary to transport a number of different substrates.</text>
</comment>
<comment type="subunit">
    <text evidence="1">Forms a stable energy-coupling factor (ECF) transporter complex composed of 2 membrane-embedded substrate-binding proteins (S component), 2 ATP-binding proteins (A component) and 2 transmembrane proteins (T component).</text>
</comment>
<comment type="subcellular location">
    <subcellularLocation>
        <location evidence="1">Cell membrane</location>
        <topology evidence="1">Peripheral membrane protein</topology>
    </subcellularLocation>
</comment>
<comment type="similarity">
    <text evidence="1">Belongs to the ABC transporter superfamily. Energy-coupling factor EcfA family.</text>
</comment>
<keyword id="KW-0067">ATP-binding</keyword>
<keyword id="KW-1003">Cell membrane</keyword>
<keyword id="KW-0472">Membrane</keyword>
<keyword id="KW-0547">Nucleotide-binding</keyword>
<keyword id="KW-1278">Translocase</keyword>
<keyword id="KW-0813">Transport</keyword>
<feature type="chain" id="PRO_0000092026" description="Energy-coupling factor transporter ATP-binding protein EcfA1">
    <location>
        <begin position="1"/>
        <end position="279"/>
    </location>
</feature>
<feature type="domain" description="ABC transporter" evidence="1">
    <location>
        <begin position="6"/>
        <end position="240"/>
    </location>
</feature>
<feature type="binding site" evidence="1">
    <location>
        <begin position="40"/>
        <end position="47"/>
    </location>
    <ligand>
        <name>ATP</name>
        <dbReference type="ChEBI" id="CHEBI:30616"/>
    </ligand>
</feature>
<sequence>MAESFVRLEHVFYKYEDTEKYAVKDVSISAQKGEWVALVGHNGSGKSTIAKLLNGLLFPEDGLIKIGHFVLSEKNIWEIRRQVGMVFQNPDNQFVGATVQDDVAFGLENHGVPHDTMVERVESALNEVGMQSYALHEPARLSGGQKQRVAIAGVLALQPDVIILDEATSMLDPRGRAEVMETIRIMREQEDITVISITHDLDEVLFADRVIVMNNGEIHSEGTPKEIFEQADAMRAIGLGVPFIIELQEKLVAGGFETGSTVLSEGALLDQLWKLNSNN</sequence>
<evidence type="ECO:0000255" key="1">
    <source>
        <dbReference type="HAMAP-Rule" id="MF_01710"/>
    </source>
</evidence>
<name>ECFA1_LISIN</name>